<name>TM116_HUMAN</name>
<gene>
    <name type="primary">TMEM116</name>
</gene>
<dbReference type="EMBL" id="AK074648">
    <property type="protein sequence ID" value="BAC11112.1"/>
    <property type="molecule type" value="mRNA"/>
</dbReference>
<dbReference type="EMBL" id="AC004024">
    <property type="status" value="NOT_ANNOTATED_CDS"/>
    <property type="molecule type" value="Genomic_DNA"/>
</dbReference>
<dbReference type="EMBL" id="AC073575">
    <property type="status" value="NOT_ANNOTATED_CDS"/>
    <property type="molecule type" value="Genomic_DNA"/>
</dbReference>
<dbReference type="EMBL" id="CH471054">
    <property type="protein sequence ID" value="EAW97987.1"/>
    <property type="molecule type" value="Genomic_DNA"/>
</dbReference>
<dbReference type="EMBL" id="CH471054">
    <property type="protein sequence ID" value="EAW97988.1"/>
    <property type="molecule type" value="Genomic_DNA"/>
</dbReference>
<dbReference type="EMBL" id="BC022360">
    <property type="protein sequence ID" value="AAH22360.2"/>
    <property type="molecule type" value="mRNA"/>
</dbReference>
<dbReference type="EMBL" id="BC048796">
    <property type="protein sequence ID" value="AAH48796.1"/>
    <property type="molecule type" value="mRNA"/>
</dbReference>
<dbReference type="EMBL" id="BC070135">
    <property type="protein sequence ID" value="AAH70135.1"/>
    <property type="molecule type" value="mRNA"/>
</dbReference>
<dbReference type="CCDS" id="CCDS55886.1">
    <molecule id="Q8NCL8-3"/>
</dbReference>
<dbReference type="CCDS" id="CCDS55887.1">
    <molecule id="Q8NCL8-2"/>
</dbReference>
<dbReference type="CCDS" id="CCDS9157.1">
    <molecule id="Q8NCL8-1"/>
</dbReference>
<dbReference type="RefSeq" id="NP_001180382.1">
    <molecule id="Q8NCL8-3"/>
    <property type="nucleotide sequence ID" value="NM_001193453.2"/>
</dbReference>
<dbReference type="RefSeq" id="NP_001180460.1">
    <molecule id="Q8NCL8-2"/>
    <property type="nucleotide sequence ID" value="NM_001193531.2"/>
</dbReference>
<dbReference type="RefSeq" id="NP_001281243.1">
    <molecule id="Q8NCL8-1"/>
    <property type="nucleotide sequence ID" value="NM_001294314.2"/>
</dbReference>
<dbReference type="RefSeq" id="NP_612350.1">
    <molecule id="Q8NCL8-1"/>
    <property type="nucleotide sequence ID" value="NM_138341.3"/>
</dbReference>
<dbReference type="RefSeq" id="XP_011537248.1">
    <property type="nucleotide sequence ID" value="XM_011538946.1"/>
</dbReference>
<dbReference type="RefSeq" id="XP_011537249.1">
    <property type="nucleotide sequence ID" value="XM_011538947.1"/>
</dbReference>
<dbReference type="RefSeq" id="XP_011537251.1">
    <property type="nucleotide sequence ID" value="XM_011538949.2"/>
</dbReference>
<dbReference type="RefSeq" id="XP_011537259.1">
    <property type="nucleotide sequence ID" value="XM_011538957.1"/>
</dbReference>
<dbReference type="RefSeq" id="XP_016875679.1">
    <property type="nucleotide sequence ID" value="XM_017020190.1"/>
</dbReference>
<dbReference type="RefSeq" id="XP_016875680.1">
    <property type="nucleotide sequence ID" value="XM_017020191.1"/>
</dbReference>
<dbReference type="RefSeq" id="XP_016875681.1">
    <property type="nucleotide sequence ID" value="XM_017020192.1"/>
</dbReference>
<dbReference type="SMR" id="Q8NCL8"/>
<dbReference type="BioGRID" id="124641">
    <property type="interactions" value="9"/>
</dbReference>
<dbReference type="FunCoup" id="Q8NCL8">
    <property type="interactions" value="28"/>
</dbReference>
<dbReference type="IntAct" id="Q8NCL8">
    <property type="interactions" value="6"/>
</dbReference>
<dbReference type="STRING" id="9606.ENSP00000447731"/>
<dbReference type="iPTMnet" id="Q8NCL8"/>
<dbReference type="PhosphoSitePlus" id="Q8NCL8"/>
<dbReference type="BioMuta" id="TMEM116"/>
<dbReference type="DMDM" id="74730154"/>
<dbReference type="jPOST" id="Q8NCL8"/>
<dbReference type="MassIVE" id="Q8NCL8"/>
<dbReference type="PaxDb" id="9606-ENSP00000447731"/>
<dbReference type="PeptideAtlas" id="Q8NCL8"/>
<dbReference type="ProteomicsDB" id="32461"/>
<dbReference type="ProteomicsDB" id="33863"/>
<dbReference type="ProteomicsDB" id="72904">
    <molecule id="Q8NCL8-1"/>
</dbReference>
<dbReference type="Antibodypedia" id="50816">
    <property type="antibodies" value="21 antibodies from 11 providers"/>
</dbReference>
<dbReference type="DNASU" id="89894"/>
<dbReference type="Ensembl" id="ENST00000355445.7">
    <molecule id="Q8NCL8-3"/>
    <property type="protein sequence ID" value="ENSP00000347620.2"/>
    <property type="gene ID" value="ENSG00000198270.14"/>
</dbReference>
<dbReference type="Ensembl" id="ENST00000550831.7">
    <molecule id="Q8NCL8-1"/>
    <property type="protein sequence ID" value="ENSP00000450377.1"/>
    <property type="gene ID" value="ENSG00000198270.14"/>
</dbReference>
<dbReference type="Ensembl" id="ENST00000552374.7">
    <molecule id="Q8NCL8-2"/>
    <property type="protein sequence ID" value="ENSP00000447731.1"/>
    <property type="gene ID" value="ENSG00000198270.14"/>
</dbReference>
<dbReference type="GeneID" id="89894"/>
<dbReference type="KEGG" id="hsa:89894"/>
<dbReference type="MANE-Select" id="ENST00000552374.7">
    <molecule id="Q8NCL8-2"/>
    <property type="protein sequence ID" value="ENSP00000447731.1"/>
    <property type="RefSeq nucleotide sequence ID" value="NM_001193531.2"/>
    <property type="RefSeq protein sequence ID" value="NP_001180460.1"/>
</dbReference>
<dbReference type="UCSC" id="uc001ttd.3">
    <molecule id="Q8NCL8-1"/>
    <property type="organism name" value="human"/>
</dbReference>
<dbReference type="AGR" id="HGNC:25084"/>
<dbReference type="CTD" id="89894"/>
<dbReference type="DisGeNET" id="89894"/>
<dbReference type="GeneCards" id="TMEM116"/>
<dbReference type="HGNC" id="HGNC:25084">
    <property type="gene designation" value="TMEM116"/>
</dbReference>
<dbReference type="HPA" id="ENSG00000198270">
    <property type="expression patterns" value="Tissue enhanced (choroid plexus, parathyroid gland)"/>
</dbReference>
<dbReference type="neXtProt" id="NX_Q8NCL8"/>
<dbReference type="OpenTargets" id="ENSG00000198270"/>
<dbReference type="PharmGKB" id="PA143485637"/>
<dbReference type="VEuPathDB" id="HostDB:ENSG00000198270"/>
<dbReference type="eggNOG" id="KOG0370">
    <property type="taxonomic scope" value="Eukaryota"/>
</dbReference>
<dbReference type="GeneTree" id="ENSGT00390000003209"/>
<dbReference type="HOGENOM" id="CLU_057808_1_0_1"/>
<dbReference type="InParanoid" id="Q8NCL8"/>
<dbReference type="OMA" id="YTISYIW"/>
<dbReference type="OrthoDB" id="10070607at2759"/>
<dbReference type="PAN-GO" id="Q8NCL8">
    <property type="GO annotations" value="3 GO annotations based on evolutionary models"/>
</dbReference>
<dbReference type="PhylomeDB" id="Q8NCL8"/>
<dbReference type="TreeFam" id="TF330947"/>
<dbReference type="PathwayCommons" id="Q8NCL8"/>
<dbReference type="BioGRID-ORCS" id="89894">
    <property type="hits" value="11 hits in 1159 CRISPR screens"/>
</dbReference>
<dbReference type="ChiTaRS" id="TMEM116">
    <property type="organism name" value="human"/>
</dbReference>
<dbReference type="GenomeRNAi" id="89894"/>
<dbReference type="Pharos" id="Q8NCL8">
    <property type="development level" value="Tdark"/>
</dbReference>
<dbReference type="PRO" id="PR:Q8NCL8"/>
<dbReference type="Proteomes" id="UP000005640">
    <property type="component" value="Chromosome 12"/>
</dbReference>
<dbReference type="RNAct" id="Q8NCL8">
    <property type="molecule type" value="protein"/>
</dbReference>
<dbReference type="Bgee" id="ENSG00000198270">
    <property type="expression patterns" value="Expressed in olfactory segment of nasal mucosa and 161 other cell types or tissues"/>
</dbReference>
<dbReference type="ExpressionAtlas" id="Q8NCL8">
    <property type="expression patterns" value="baseline and differential"/>
</dbReference>
<dbReference type="GO" id="GO:0016020">
    <property type="term" value="C:membrane"/>
    <property type="evidence" value="ECO:0007669"/>
    <property type="project" value="UniProtKB-SubCell"/>
</dbReference>
<dbReference type="GO" id="GO:0007165">
    <property type="term" value="P:signal transduction"/>
    <property type="evidence" value="ECO:0007669"/>
    <property type="project" value="UniProtKB-ARBA"/>
</dbReference>
<dbReference type="Gene3D" id="1.20.1070.10">
    <property type="entry name" value="Rhodopsin 7-helix transmembrane proteins"/>
    <property type="match status" value="1"/>
</dbReference>
<dbReference type="PANTHER" id="PTHR23112">
    <property type="entry name" value="G PROTEIN-COUPLED RECEPTOR 157-RELATED"/>
    <property type="match status" value="1"/>
</dbReference>
<dbReference type="PANTHER" id="PTHR23112:SF0">
    <property type="entry name" value="TRANSMEMBRANE PROTEIN 116"/>
    <property type="match status" value="1"/>
</dbReference>
<dbReference type="SUPFAM" id="SSF81321">
    <property type="entry name" value="Family A G protein-coupled receptor-like"/>
    <property type="match status" value="1"/>
</dbReference>
<comment type="subcellular location">
    <subcellularLocation>
        <location evidence="2">Membrane</location>
        <topology evidence="2">Multi-pass membrane protein</topology>
    </subcellularLocation>
</comment>
<comment type="alternative products">
    <event type="alternative splicing"/>
    <isoform>
        <id>Q8NCL8-1</id>
        <name>1</name>
        <sequence type="displayed"/>
    </isoform>
    <isoform>
        <id>Q8NCL8-2</id>
        <name>2</name>
        <sequence type="described" ref="VSP_046988"/>
    </isoform>
    <isoform>
        <id>Q8NCL8-3</id>
        <name>3</name>
        <sequence type="described" ref="VSP_046987"/>
    </isoform>
</comment>
<feature type="chain" id="PRO_0000251195" description="Transmembrane protein 116">
    <location>
        <begin position="1"/>
        <end position="245"/>
    </location>
</feature>
<feature type="transmembrane region" description="Helical" evidence="1">
    <location>
        <begin position="24"/>
        <end position="44"/>
    </location>
</feature>
<feature type="transmembrane region" description="Helical" evidence="1">
    <location>
        <begin position="88"/>
        <end position="108"/>
    </location>
</feature>
<feature type="transmembrane region" description="Helical" evidence="1">
    <location>
        <begin position="141"/>
        <end position="161"/>
    </location>
</feature>
<feature type="transmembrane region" description="Helical" evidence="1">
    <location>
        <begin position="173"/>
        <end position="195"/>
    </location>
</feature>
<feature type="splice variant" id="VSP_046987" description="In isoform 3." evidence="2">
    <original>MKHTQSGQSTSPL</original>
    <variation>MATLSVIGSSSLIAYAVFHNIQKSPEIRPLFYLSFCDLLLGLCWLTETLLYGASVANKDIICYNLQAVGQ</variation>
    <location>
        <begin position="1"/>
        <end position="13"/>
    </location>
</feature>
<feature type="splice variant" id="VSP_046988" description="In isoform 2." evidence="2">
    <original>M</original>
    <variation>MATLSVIGSSSLIAYAVFHNIQKSPEIRPLFYLSFCDLLLGLCWLTETLLYGASVANKDIICYNLQAVGQIFYISSFLYTVNYIWYLYTELRM</variation>
    <location>
        <position position="1"/>
    </location>
</feature>
<feature type="sequence variant" id="VAR_027659" description="In dbSNP:rs3752630.">
    <original>C</original>
    <variation>G</variation>
    <location>
        <position position="22"/>
    </location>
</feature>
<feature type="sequence conflict" description="In Ref. 4; AAH70135." evidence="2" ref="4">
    <original>Y</original>
    <variation>F</variation>
    <location>
        <position position="17"/>
    </location>
</feature>
<feature type="sequence conflict" description="In Ref. 4; AAH70135." evidence="2" ref="4">
    <original>H</original>
    <variation>R</variation>
    <location>
        <position position="170"/>
    </location>
</feature>
<evidence type="ECO:0000255" key="1"/>
<evidence type="ECO:0000305" key="2"/>
<organism>
    <name type="scientific">Homo sapiens</name>
    <name type="common">Human</name>
    <dbReference type="NCBI Taxonomy" id="9606"/>
    <lineage>
        <taxon>Eukaryota</taxon>
        <taxon>Metazoa</taxon>
        <taxon>Chordata</taxon>
        <taxon>Craniata</taxon>
        <taxon>Vertebrata</taxon>
        <taxon>Euteleostomi</taxon>
        <taxon>Mammalia</taxon>
        <taxon>Eutheria</taxon>
        <taxon>Euarchontoglires</taxon>
        <taxon>Primates</taxon>
        <taxon>Haplorrhini</taxon>
        <taxon>Catarrhini</taxon>
        <taxon>Hominidae</taxon>
        <taxon>Homo</taxon>
    </lineage>
</organism>
<proteinExistence type="evidence at protein level"/>
<protein>
    <recommendedName>
        <fullName>Transmembrane protein 116</fullName>
    </recommendedName>
</protein>
<reference key="1">
    <citation type="journal article" date="2004" name="Nat. Genet.">
        <title>Complete sequencing and characterization of 21,243 full-length human cDNAs.</title>
        <authorList>
            <person name="Ota T."/>
            <person name="Suzuki Y."/>
            <person name="Nishikawa T."/>
            <person name="Otsuki T."/>
            <person name="Sugiyama T."/>
            <person name="Irie R."/>
            <person name="Wakamatsu A."/>
            <person name="Hayashi K."/>
            <person name="Sato H."/>
            <person name="Nagai K."/>
            <person name="Kimura K."/>
            <person name="Makita H."/>
            <person name="Sekine M."/>
            <person name="Obayashi M."/>
            <person name="Nishi T."/>
            <person name="Shibahara T."/>
            <person name="Tanaka T."/>
            <person name="Ishii S."/>
            <person name="Yamamoto J."/>
            <person name="Saito K."/>
            <person name="Kawai Y."/>
            <person name="Isono Y."/>
            <person name="Nakamura Y."/>
            <person name="Nagahari K."/>
            <person name="Murakami K."/>
            <person name="Yasuda T."/>
            <person name="Iwayanagi T."/>
            <person name="Wagatsuma M."/>
            <person name="Shiratori A."/>
            <person name="Sudo H."/>
            <person name="Hosoiri T."/>
            <person name="Kaku Y."/>
            <person name="Kodaira H."/>
            <person name="Kondo H."/>
            <person name="Sugawara M."/>
            <person name="Takahashi M."/>
            <person name="Kanda K."/>
            <person name="Yokoi T."/>
            <person name="Furuya T."/>
            <person name="Kikkawa E."/>
            <person name="Omura Y."/>
            <person name="Abe K."/>
            <person name="Kamihara K."/>
            <person name="Katsuta N."/>
            <person name="Sato K."/>
            <person name="Tanikawa M."/>
            <person name="Yamazaki M."/>
            <person name="Ninomiya K."/>
            <person name="Ishibashi T."/>
            <person name="Yamashita H."/>
            <person name="Murakawa K."/>
            <person name="Fujimori K."/>
            <person name="Tanai H."/>
            <person name="Kimata M."/>
            <person name="Watanabe M."/>
            <person name="Hiraoka S."/>
            <person name="Chiba Y."/>
            <person name="Ishida S."/>
            <person name="Ono Y."/>
            <person name="Takiguchi S."/>
            <person name="Watanabe S."/>
            <person name="Yosida M."/>
            <person name="Hotuta T."/>
            <person name="Kusano J."/>
            <person name="Kanehori K."/>
            <person name="Takahashi-Fujii A."/>
            <person name="Hara H."/>
            <person name="Tanase T.-O."/>
            <person name="Nomura Y."/>
            <person name="Togiya S."/>
            <person name="Komai F."/>
            <person name="Hara R."/>
            <person name="Takeuchi K."/>
            <person name="Arita M."/>
            <person name="Imose N."/>
            <person name="Musashino K."/>
            <person name="Yuuki H."/>
            <person name="Oshima A."/>
            <person name="Sasaki N."/>
            <person name="Aotsuka S."/>
            <person name="Yoshikawa Y."/>
            <person name="Matsunawa H."/>
            <person name="Ichihara T."/>
            <person name="Shiohata N."/>
            <person name="Sano S."/>
            <person name="Moriya S."/>
            <person name="Momiyama H."/>
            <person name="Satoh N."/>
            <person name="Takami S."/>
            <person name="Terashima Y."/>
            <person name="Suzuki O."/>
            <person name="Nakagawa S."/>
            <person name="Senoh A."/>
            <person name="Mizoguchi H."/>
            <person name="Goto Y."/>
            <person name="Shimizu F."/>
            <person name="Wakebe H."/>
            <person name="Hishigaki H."/>
            <person name="Watanabe T."/>
            <person name="Sugiyama A."/>
            <person name="Takemoto M."/>
            <person name="Kawakami B."/>
            <person name="Yamazaki M."/>
            <person name="Watanabe K."/>
            <person name="Kumagai A."/>
            <person name="Itakura S."/>
            <person name="Fukuzumi Y."/>
            <person name="Fujimori Y."/>
            <person name="Komiyama M."/>
            <person name="Tashiro H."/>
            <person name="Tanigami A."/>
            <person name="Fujiwara T."/>
            <person name="Ono T."/>
            <person name="Yamada K."/>
            <person name="Fujii Y."/>
            <person name="Ozaki K."/>
            <person name="Hirao M."/>
            <person name="Ohmori Y."/>
            <person name="Kawabata A."/>
            <person name="Hikiji T."/>
            <person name="Kobatake N."/>
            <person name="Inagaki H."/>
            <person name="Ikema Y."/>
            <person name="Okamoto S."/>
            <person name="Okitani R."/>
            <person name="Kawakami T."/>
            <person name="Noguchi S."/>
            <person name="Itoh T."/>
            <person name="Shigeta K."/>
            <person name="Senba T."/>
            <person name="Matsumura K."/>
            <person name="Nakajima Y."/>
            <person name="Mizuno T."/>
            <person name="Morinaga M."/>
            <person name="Sasaki M."/>
            <person name="Togashi T."/>
            <person name="Oyama M."/>
            <person name="Hata H."/>
            <person name="Watanabe M."/>
            <person name="Komatsu T."/>
            <person name="Mizushima-Sugano J."/>
            <person name="Satoh T."/>
            <person name="Shirai Y."/>
            <person name="Takahashi Y."/>
            <person name="Nakagawa K."/>
            <person name="Okumura K."/>
            <person name="Nagase T."/>
            <person name="Nomura N."/>
            <person name="Kikuchi H."/>
            <person name="Masuho Y."/>
            <person name="Yamashita R."/>
            <person name="Nakai K."/>
            <person name="Yada T."/>
            <person name="Nakamura Y."/>
            <person name="Ohara O."/>
            <person name="Isogai T."/>
            <person name="Sugano S."/>
        </authorList>
    </citation>
    <scope>NUCLEOTIDE SEQUENCE [LARGE SCALE MRNA] (ISOFORM 1)</scope>
    <source>
        <tissue>Mammary gland</tissue>
    </source>
</reference>
<reference key="2">
    <citation type="journal article" date="2006" name="Nature">
        <title>The finished DNA sequence of human chromosome 12.</title>
        <authorList>
            <person name="Scherer S.E."/>
            <person name="Muzny D.M."/>
            <person name="Buhay C.J."/>
            <person name="Chen R."/>
            <person name="Cree A."/>
            <person name="Ding Y."/>
            <person name="Dugan-Rocha S."/>
            <person name="Gill R."/>
            <person name="Gunaratne P."/>
            <person name="Harris R.A."/>
            <person name="Hawes A.C."/>
            <person name="Hernandez J."/>
            <person name="Hodgson A.V."/>
            <person name="Hume J."/>
            <person name="Jackson A."/>
            <person name="Khan Z.M."/>
            <person name="Kovar-Smith C."/>
            <person name="Lewis L.R."/>
            <person name="Lozado R.J."/>
            <person name="Metzker M.L."/>
            <person name="Milosavljevic A."/>
            <person name="Miner G.R."/>
            <person name="Montgomery K.T."/>
            <person name="Morgan M.B."/>
            <person name="Nazareth L.V."/>
            <person name="Scott G."/>
            <person name="Sodergren E."/>
            <person name="Song X.-Z."/>
            <person name="Steffen D."/>
            <person name="Lovering R.C."/>
            <person name="Wheeler D.A."/>
            <person name="Worley K.C."/>
            <person name="Yuan Y."/>
            <person name="Zhang Z."/>
            <person name="Adams C.Q."/>
            <person name="Ansari-Lari M.A."/>
            <person name="Ayele M."/>
            <person name="Brown M.J."/>
            <person name="Chen G."/>
            <person name="Chen Z."/>
            <person name="Clerc-Blankenburg K.P."/>
            <person name="Davis C."/>
            <person name="Delgado O."/>
            <person name="Dinh H.H."/>
            <person name="Draper H."/>
            <person name="Gonzalez-Garay M.L."/>
            <person name="Havlak P."/>
            <person name="Jackson L.R."/>
            <person name="Jacob L.S."/>
            <person name="Kelly S.H."/>
            <person name="Li L."/>
            <person name="Li Z."/>
            <person name="Liu J."/>
            <person name="Liu W."/>
            <person name="Lu J."/>
            <person name="Maheshwari M."/>
            <person name="Nguyen B.-V."/>
            <person name="Okwuonu G.O."/>
            <person name="Pasternak S."/>
            <person name="Perez L.M."/>
            <person name="Plopper F.J.H."/>
            <person name="Santibanez J."/>
            <person name="Shen H."/>
            <person name="Tabor P.E."/>
            <person name="Verduzco D."/>
            <person name="Waldron L."/>
            <person name="Wang Q."/>
            <person name="Williams G.A."/>
            <person name="Zhang J."/>
            <person name="Zhou J."/>
            <person name="Allen C.C."/>
            <person name="Amin A.G."/>
            <person name="Anyalebechi V."/>
            <person name="Bailey M."/>
            <person name="Barbaria J.A."/>
            <person name="Bimage K.E."/>
            <person name="Bryant N.P."/>
            <person name="Burch P.E."/>
            <person name="Burkett C.E."/>
            <person name="Burrell K.L."/>
            <person name="Calderon E."/>
            <person name="Cardenas V."/>
            <person name="Carter K."/>
            <person name="Casias K."/>
            <person name="Cavazos I."/>
            <person name="Cavazos S.R."/>
            <person name="Ceasar H."/>
            <person name="Chacko J."/>
            <person name="Chan S.N."/>
            <person name="Chavez D."/>
            <person name="Christopoulos C."/>
            <person name="Chu J."/>
            <person name="Cockrell R."/>
            <person name="Cox C.D."/>
            <person name="Dang M."/>
            <person name="Dathorne S.R."/>
            <person name="David R."/>
            <person name="Davis C.M."/>
            <person name="Davy-Carroll L."/>
            <person name="Deshazo D.R."/>
            <person name="Donlin J.E."/>
            <person name="D'Souza L."/>
            <person name="Eaves K.A."/>
            <person name="Egan A."/>
            <person name="Emery-Cohen A.J."/>
            <person name="Escotto M."/>
            <person name="Flagg N."/>
            <person name="Forbes L.D."/>
            <person name="Gabisi A.M."/>
            <person name="Garza M."/>
            <person name="Hamilton C."/>
            <person name="Henderson N."/>
            <person name="Hernandez O."/>
            <person name="Hines S."/>
            <person name="Hogues M.E."/>
            <person name="Huang M."/>
            <person name="Idlebird D.G."/>
            <person name="Johnson R."/>
            <person name="Jolivet A."/>
            <person name="Jones S."/>
            <person name="Kagan R."/>
            <person name="King L.M."/>
            <person name="Leal B."/>
            <person name="Lebow H."/>
            <person name="Lee S."/>
            <person name="LeVan J.M."/>
            <person name="Lewis L.C."/>
            <person name="London P."/>
            <person name="Lorensuhewa L.M."/>
            <person name="Loulseged H."/>
            <person name="Lovett D.A."/>
            <person name="Lucier A."/>
            <person name="Lucier R.L."/>
            <person name="Ma J."/>
            <person name="Madu R.C."/>
            <person name="Mapua P."/>
            <person name="Martindale A.D."/>
            <person name="Martinez E."/>
            <person name="Massey E."/>
            <person name="Mawhiney S."/>
            <person name="Meador M.G."/>
            <person name="Mendez S."/>
            <person name="Mercado C."/>
            <person name="Mercado I.C."/>
            <person name="Merritt C.E."/>
            <person name="Miner Z.L."/>
            <person name="Minja E."/>
            <person name="Mitchell T."/>
            <person name="Mohabbat F."/>
            <person name="Mohabbat K."/>
            <person name="Montgomery B."/>
            <person name="Moore N."/>
            <person name="Morris S."/>
            <person name="Munidasa M."/>
            <person name="Ngo R.N."/>
            <person name="Nguyen N.B."/>
            <person name="Nickerson E."/>
            <person name="Nwaokelemeh O.O."/>
            <person name="Nwokenkwo S."/>
            <person name="Obregon M."/>
            <person name="Oguh M."/>
            <person name="Oragunye N."/>
            <person name="Oviedo R.J."/>
            <person name="Parish B.J."/>
            <person name="Parker D.N."/>
            <person name="Parrish J."/>
            <person name="Parks K.L."/>
            <person name="Paul H.A."/>
            <person name="Payton B.A."/>
            <person name="Perez A."/>
            <person name="Perrin W."/>
            <person name="Pickens A."/>
            <person name="Primus E.L."/>
            <person name="Pu L.-L."/>
            <person name="Puazo M."/>
            <person name="Quiles M.M."/>
            <person name="Quiroz J.B."/>
            <person name="Rabata D."/>
            <person name="Reeves K."/>
            <person name="Ruiz S.J."/>
            <person name="Shao H."/>
            <person name="Sisson I."/>
            <person name="Sonaike T."/>
            <person name="Sorelle R.P."/>
            <person name="Sutton A.E."/>
            <person name="Svatek A.F."/>
            <person name="Svetz L.A."/>
            <person name="Tamerisa K.S."/>
            <person name="Taylor T.R."/>
            <person name="Teague B."/>
            <person name="Thomas N."/>
            <person name="Thorn R.D."/>
            <person name="Trejos Z.Y."/>
            <person name="Trevino B.K."/>
            <person name="Ukegbu O.N."/>
            <person name="Urban J.B."/>
            <person name="Vasquez L.I."/>
            <person name="Vera V.A."/>
            <person name="Villasana D.M."/>
            <person name="Wang L."/>
            <person name="Ward-Moore S."/>
            <person name="Warren J.T."/>
            <person name="Wei X."/>
            <person name="White F."/>
            <person name="Williamson A.L."/>
            <person name="Wleczyk R."/>
            <person name="Wooden H.S."/>
            <person name="Wooden S.H."/>
            <person name="Yen J."/>
            <person name="Yoon L."/>
            <person name="Yoon V."/>
            <person name="Zorrilla S.E."/>
            <person name="Nelson D."/>
            <person name="Kucherlapati R."/>
            <person name="Weinstock G."/>
            <person name="Gibbs R.A."/>
        </authorList>
    </citation>
    <scope>NUCLEOTIDE SEQUENCE [LARGE SCALE GENOMIC DNA]</scope>
</reference>
<reference key="3">
    <citation type="submission" date="2005-07" db="EMBL/GenBank/DDBJ databases">
        <authorList>
            <person name="Mural R.J."/>
            <person name="Istrail S."/>
            <person name="Sutton G.G."/>
            <person name="Florea L."/>
            <person name="Halpern A.L."/>
            <person name="Mobarry C.M."/>
            <person name="Lippert R."/>
            <person name="Walenz B."/>
            <person name="Shatkay H."/>
            <person name="Dew I."/>
            <person name="Miller J.R."/>
            <person name="Flanigan M.J."/>
            <person name="Edwards N.J."/>
            <person name="Bolanos R."/>
            <person name="Fasulo D."/>
            <person name="Halldorsson B.V."/>
            <person name="Hannenhalli S."/>
            <person name="Turner R."/>
            <person name="Yooseph S."/>
            <person name="Lu F."/>
            <person name="Nusskern D.R."/>
            <person name="Shue B.C."/>
            <person name="Zheng X.H."/>
            <person name="Zhong F."/>
            <person name="Delcher A.L."/>
            <person name="Huson D.H."/>
            <person name="Kravitz S.A."/>
            <person name="Mouchard L."/>
            <person name="Reinert K."/>
            <person name="Remington K.A."/>
            <person name="Clark A.G."/>
            <person name="Waterman M.S."/>
            <person name="Eichler E.E."/>
            <person name="Adams M.D."/>
            <person name="Hunkapiller M.W."/>
            <person name="Myers E.W."/>
            <person name="Venter J.C."/>
        </authorList>
    </citation>
    <scope>NUCLEOTIDE SEQUENCE [LARGE SCALE GENOMIC DNA]</scope>
</reference>
<reference key="4">
    <citation type="journal article" date="2004" name="Genome Res.">
        <title>The status, quality, and expansion of the NIH full-length cDNA project: the Mammalian Gene Collection (MGC).</title>
        <authorList>
            <consortium name="The MGC Project Team"/>
        </authorList>
    </citation>
    <scope>NUCLEOTIDE SEQUENCE [LARGE SCALE MRNA] (ISOFORM 1)</scope>
    <source>
        <tissue>Brain</tissue>
        <tissue>Lung</tissue>
    </source>
</reference>
<sequence>MKHTQSGQSTSPLVIDYTCRVCQMAFVFSSLIPLLLMTPVFCLGNTSECFQNFSQSHKCILMHSPPSAMAELPPSANTSVCSTLYFYGIAIFLGSFVLSLLTIMVLLIRAQTLYKKFVKSTGFLGSEQWAVIHIVDQRVRFYPVAFFCCWGPAVILMIIKLTKPQDTKLHMALYVLQALTATSQGLLNCGVYGWTQHKFHQLKQEARRDADTQTPLLCSQKRFYSRGLNSLESTLTFPASTSTIF</sequence>
<keyword id="KW-0025">Alternative splicing</keyword>
<keyword id="KW-0472">Membrane</keyword>
<keyword id="KW-1267">Proteomics identification</keyword>
<keyword id="KW-1185">Reference proteome</keyword>
<keyword id="KW-0812">Transmembrane</keyword>
<keyword id="KW-1133">Transmembrane helix</keyword>
<accession>Q8NCL8</accession>
<accession>G3V1W7</accession>
<accession>G5E985</accession>
<accession>Q6NSH5</accession>
<accession>Q8IZ66</accession>